<organism>
    <name type="scientific">Mastigocladus laminosus</name>
    <name type="common">Fischerella sp.</name>
    <dbReference type="NCBI Taxonomy" id="83541"/>
    <lineage>
        <taxon>Bacteria</taxon>
        <taxon>Bacillati</taxon>
        <taxon>Cyanobacteriota</taxon>
        <taxon>Cyanophyceae</taxon>
        <taxon>Nostocales</taxon>
        <taxon>Hapalosiphonaceae</taxon>
        <taxon>Mastigocladus</taxon>
    </lineage>
</organism>
<gene>
    <name type="primary">cpcG1</name>
</gene>
<comment type="function">
    <text evidence="1">Rod-core linker protein required for attachment of phycocyanin to allophycocyanin in cores of phycobilisomes.</text>
</comment>
<comment type="function">
    <text evidence="1">Linker polypeptides determine the state of aggregation and the location of the disk-shaped phycobiliprotein units within the phycobilisome and modulate their spectroscopic properties in order to mediate a directed and optimal energy transfer.</text>
</comment>
<comment type="subunit">
    <text evidence="1">The phycobilisome is a hemidiscoidal structure that is composed of two distinct substructures: a core complex and a number of rods radiating from the core.</text>
</comment>
<comment type="subcellular location">
    <subcellularLocation>
        <location evidence="1">Cellular thylakoid membrane</location>
        <topology evidence="1">Peripheral membrane protein</topology>
        <orientation evidence="1">Cytoplasmic side</orientation>
    </subcellularLocation>
</comment>
<comment type="similarity">
    <text evidence="2">Belongs to the phycobilisome linker protein family.</text>
</comment>
<proteinExistence type="inferred from homology"/>
<accession>P29731</accession>
<dbReference type="EMBL" id="X59763">
    <property type="protein sequence ID" value="CAA42433.1"/>
    <property type="molecule type" value="Genomic_DNA"/>
</dbReference>
<dbReference type="SMR" id="P29731"/>
<dbReference type="GO" id="GO:0030089">
    <property type="term" value="C:phycobilisome"/>
    <property type="evidence" value="ECO:0007669"/>
    <property type="project" value="UniProtKB-KW"/>
</dbReference>
<dbReference type="GO" id="GO:0031676">
    <property type="term" value="C:plasma membrane-derived thylakoid membrane"/>
    <property type="evidence" value="ECO:0007669"/>
    <property type="project" value="UniProtKB-SubCell"/>
</dbReference>
<dbReference type="GO" id="GO:0015979">
    <property type="term" value="P:photosynthesis"/>
    <property type="evidence" value="ECO:0007669"/>
    <property type="project" value="UniProtKB-KW"/>
</dbReference>
<dbReference type="Gene3D" id="1.10.3130.20">
    <property type="entry name" value="Phycobilisome linker domain"/>
    <property type="match status" value="1"/>
</dbReference>
<dbReference type="InterPro" id="IPR001297">
    <property type="entry name" value="PBS_linker_dom"/>
</dbReference>
<dbReference type="InterPro" id="IPR038255">
    <property type="entry name" value="PBS_linker_sf"/>
</dbReference>
<dbReference type="InterPro" id="IPR016470">
    <property type="entry name" value="Phycobilisome"/>
</dbReference>
<dbReference type="PANTHER" id="PTHR34011">
    <property type="entry name" value="PHYCOBILISOME 32.1 KDA LINKER POLYPEPTIDE, PHYCOCYANIN-ASSOCIATED, ROD 2-RELATED"/>
    <property type="match status" value="1"/>
</dbReference>
<dbReference type="Pfam" id="PF00427">
    <property type="entry name" value="PBS_linker_poly"/>
    <property type="match status" value="1"/>
</dbReference>
<dbReference type="PIRSF" id="PIRSF005898">
    <property type="entry name" value="Phycobilisome_CpeC/CpcI"/>
    <property type="match status" value="1"/>
</dbReference>
<dbReference type="PROSITE" id="PS51445">
    <property type="entry name" value="PBS_LINKER"/>
    <property type="match status" value="1"/>
</dbReference>
<sequence>MPIPLLSFPLTTQNQRVEGYEVPNEDTPTIYRLTDTSSDTEIDAIIWAAYRQIFSEHLILETYRQPYLESQLRNRAINVRDFIRGLGKSEVYRQEVAQTNSNYRLVDISFKRFLGRATYGKSEQIAWSIVIATQGLHGFIDALVDSEEYRQNFGDDIVPFQRRRFKDRPFNLVNPRYADYWRNRLLEQFLGGQSFYRVVRAGESGKRGVAGAIPSTFLSMAASIAPSGISYQRTADSARTFISTVKLPETTSESKTPPPTVKPATVALPYRYIPGNKTT</sequence>
<reference key="1">
    <citation type="journal article" date="1992" name="Eur. J. Biochem.">
        <title>Structure of the genes encoding the rod-core linker polypeptides of Mastigocladus laminosus phycobilisomes and functional aspects of the phycobiliprotein/linker-polypeptide interactions.</title>
        <authorList>
            <person name="Glauser M."/>
            <person name="Stirewalt V.L."/>
            <person name="Bryant D.A."/>
            <person name="Sidler W."/>
            <person name="Zuber H."/>
        </authorList>
    </citation>
    <scope>NUCLEOTIDE SEQUENCE [GENOMIC DNA]</scope>
    <source>
        <strain>PCC 7603</strain>
    </source>
</reference>
<keyword id="KW-0042">Antenna complex</keyword>
<keyword id="KW-0472">Membrane</keyword>
<keyword id="KW-0602">Photosynthesis</keyword>
<keyword id="KW-0605">Phycobilisome</keyword>
<keyword id="KW-0793">Thylakoid</keyword>
<protein>
    <recommendedName>
        <fullName>Phycobilisome rod-core linker polypeptide CpcG1</fullName>
    </recommendedName>
    <alternativeName>
        <fullName>L-RC 31.7</fullName>
    </alternativeName>
</protein>
<evidence type="ECO:0000250" key="1"/>
<evidence type="ECO:0000255" key="2">
    <source>
        <dbReference type="PROSITE-ProRule" id="PRU00775"/>
    </source>
</evidence>
<feature type="chain" id="PRO_0000199250" description="Phycobilisome rod-core linker polypeptide CpcG1">
    <location>
        <begin position="1"/>
        <end position="279"/>
    </location>
</feature>
<feature type="domain" description="PBS-linker" evidence="2">
    <location>
        <begin position="11"/>
        <end position="189"/>
    </location>
</feature>
<name>PYG1_MASLA</name>